<dbReference type="EMBL" id="CP000447">
    <property type="protein sequence ID" value="ABI70029.1"/>
    <property type="molecule type" value="Genomic_DNA"/>
</dbReference>
<dbReference type="RefSeq" id="WP_011635656.1">
    <property type="nucleotide sequence ID" value="NC_008345.1"/>
</dbReference>
<dbReference type="SMR" id="Q089N6"/>
<dbReference type="STRING" id="318167.Sfri_0166"/>
<dbReference type="GeneID" id="90572189"/>
<dbReference type="KEGG" id="sfr:Sfri_0166"/>
<dbReference type="eggNOG" id="COG1841">
    <property type="taxonomic scope" value="Bacteria"/>
</dbReference>
<dbReference type="HOGENOM" id="CLU_131047_1_4_6"/>
<dbReference type="OrthoDB" id="9812790at2"/>
<dbReference type="Proteomes" id="UP000000684">
    <property type="component" value="Chromosome"/>
</dbReference>
<dbReference type="GO" id="GO:0022625">
    <property type="term" value="C:cytosolic large ribosomal subunit"/>
    <property type="evidence" value="ECO:0007669"/>
    <property type="project" value="TreeGrafter"/>
</dbReference>
<dbReference type="GO" id="GO:0003735">
    <property type="term" value="F:structural constituent of ribosome"/>
    <property type="evidence" value="ECO:0007669"/>
    <property type="project" value="InterPro"/>
</dbReference>
<dbReference type="GO" id="GO:0006412">
    <property type="term" value="P:translation"/>
    <property type="evidence" value="ECO:0007669"/>
    <property type="project" value="UniProtKB-UniRule"/>
</dbReference>
<dbReference type="CDD" id="cd01658">
    <property type="entry name" value="Ribosomal_L30"/>
    <property type="match status" value="1"/>
</dbReference>
<dbReference type="FunFam" id="3.30.1390.20:FF:000001">
    <property type="entry name" value="50S ribosomal protein L30"/>
    <property type="match status" value="1"/>
</dbReference>
<dbReference type="Gene3D" id="3.30.1390.20">
    <property type="entry name" value="Ribosomal protein L30, ferredoxin-like fold domain"/>
    <property type="match status" value="1"/>
</dbReference>
<dbReference type="HAMAP" id="MF_01371_B">
    <property type="entry name" value="Ribosomal_uL30_B"/>
    <property type="match status" value="1"/>
</dbReference>
<dbReference type="InterPro" id="IPR036919">
    <property type="entry name" value="Ribo_uL30_ferredoxin-like_sf"/>
</dbReference>
<dbReference type="InterPro" id="IPR005996">
    <property type="entry name" value="Ribosomal_uL30_bac-type"/>
</dbReference>
<dbReference type="InterPro" id="IPR018038">
    <property type="entry name" value="Ribosomal_uL30_CS"/>
</dbReference>
<dbReference type="InterPro" id="IPR016082">
    <property type="entry name" value="Ribosomal_uL30_ferredoxin-like"/>
</dbReference>
<dbReference type="NCBIfam" id="TIGR01308">
    <property type="entry name" value="rpmD_bact"/>
    <property type="match status" value="1"/>
</dbReference>
<dbReference type="PANTHER" id="PTHR15892:SF2">
    <property type="entry name" value="LARGE RIBOSOMAL SUBUNIT PROTEIN UL30M"/>
    <property type="match status" value="1"/>
</dbReference>
<dbReference type="PANTHER" id="PTHR15892">
    <property type="entry name" value="MITOCHONDRIAL RIBOSOMAL PROTEIN L30"/>
    <property type="match status" value="1"/>
</dbReference>
<dbReference type="Pfam" id="PF00327">
    <property type="entry name" value="Ribosomal_L30"/>
    <property type="match status" value="1"/>
</dbReference>
<dbReference type="PIRSF" id="PIRSF002211">
    <property type="entry name" value="Ribosomal_L30_bac-type"/>
    <property type="match status" value="1"/>
</dbReference>
<dbReference type="SUPFAM" id="SSF55129">
    <property type="entry name" value="Ribosomal protein L30p/L7e"/>
    <property type="match status" value="1"/>
</dbReference>
<dbReference type="PROSITE" id="PS00634">
    <property type="entry name" value="RIBOSOMAL_L30"/>
    <property type="match status" value="1"/>
</dbReference>
<sequence>MATKTLKVTQTKSSIGRLPKHRATLTGLGLRRINHTVEVEDTPSVRGMINKVYYMVSVEELG</sequence>
<organism>
    <name type="scientific">Shewanella frigidimarina (strain NCIMB 400)</name>
    <dbReference type="NCBI Taxonomy" id="318167"/>
    <lineage>
        <taxon>Bacteria</taxon>
        <taxon>Pseudomonadati</taxon>
        <taxon>Pseudomonadota</taxon>
        <taxon>Gammaproteobacteria</taxon>
        <taxon>Alteromonadales</taxon>
        <taxon>Shewanellaceae</taxon>
        <taxon>Shewanella</taxon>
    </lineage>
</organism>
<feature type="chain" id="PRO_0000273850" description="Large ribosomal subunit protein uL30">
    <location>
        <begin position="1"/>
        <end position="62"/>
    </location>
</feature>
<evidence type="ECO:0000255" key="1">
    <source>
        <dbReference type="HAMAP-Rule" id="MF_01371"/>
    </source>
</evidence>
<evidence type="ECO:0000305" key="2"/>
<gene>
    <name evidence="1" type="primary">rpmD</name>
    <name type="ordered locus">Sfri_0166</name>
</gene>
<proteinExistence type="inferred from homology"/>
<accession>Q089N6</accession>
<protein>
    <recommendedName>
        <fullName evidence="1">Large ribosomal subunit protein uL30</fullName>
    </recommendedName>
    <alternativeName>
        <fullName evidence="2">50S ribosomal protein L30</fullName>
    </alternativeName>
</protein>
<name>RL30_SHEFN</name>
<keyword id="KW-1185">Reference proteome</keyword>
<keyword id="KW-0687">Ribonucleoprotein</keyword>
<keyword id="KW-0689">Ribosomal protein</keyword>
<comment type="subunit">
    <text evidence="1">Part of the 50S ribosomal subunit.</text>
</comment>
<comment type="similarity">
    <text evidence="1">Belongs to the universal ribosomal protein uL30 family.</text>
</comment>
<reference key="1">
    <citation type="submission" date="2006-08" db="EMBL/GenBank/DDBJ databases">
        <title>Complete sequence of Shewanella frigidimarina NCIMB 400.</title>
        <authorList>
            <consortium name="US DOE Joint Genome Institute"/>
            <person name="Copeland A."/>
            <person name="Lucas S."/>
            <person name="Lapidus A."/>
            <person name="Barry K."/>
            <person name="Detter J.C."/>
            <person name="Glavina del Rio T."/>
            <person name="Hammon N."/>
            <person name="Israni S."/>
            <person name="Dalin E."/>
            <person name="Tice H."/>
            <person name="Pitluck S."/>
            <person name="Fredrickson J.K."/>
            <person name="Kolker E."/>
            <person name="McCuel L.A."/>
            <person name="DiChristina T."/>
            <person name="Nealson K.H."/>
            <person name="Newman D."/>
            <person name="Tiedje J.M."/>
            <person name="Zhou J."/>
            <person name="Romine M.F."/>
            <person name="Culley D.E."/>
            <person name="Serres M."/>
            <person name="Chertkov O."/>
            <person name="Brettin T."/>
            <person name="Bruce D."/>
            <person name="Han C."/>
            <person name="Tapia R."/>
            <person name="Gilna P."/>
            <person name="Schmutz J."/>
            <person name="Larimer F."/>
            <person name="Land M."/>
            <person name="Hauser L."/>
            <person name="Kyrpides N."/>
            <person name="Mikhailova N."/>
            <person name="Richardson P."/>
        </authorList>
    </citation>
    <scope>NUCLEOTIDE SEQUENCE [LARGE SCALE GENOMIC DNA]</scope>
    <source>
        <strain>NCIMB 400</strain>
    </source>
</reference>